<feature type="chain" id="PRO_0000315059" description="UDP-N-acetylglucosamine--N-acetylmuramyl-(pentapeptide) pyrophosphoryl-undecaprenol N-acetylglucosamine transferase">
    <location>
        <begin position="1"/>
        <end position="399"/>
    </location>
</feature>
<feature type="region of interest" description="Disordered" evidence="2">
    <location>
        <begin position="1"/>
        <end position="31"/>
    </location>
</feature>
<feature type="compositionally biased region" description="Basic residues" evidence="2">
    <location>
        <begin position="7"/>
        <end position="21"/>
    </location>
</feature>
<feature type="binding site" evidence="1">
    <location>
        <begin position="58"/>
        <end position="60"/>
    </location>
    <ligand>
        <name>UDP-N-acetyl-alpha-D-glucosamine</name>
        <dbReference type="ChEBI" id="CHEBI:57705"/>
    </ligand>
</feature>
<feature type="binding site" evidence="1">
    <location>
        <position position="170"/>
    </location>
    <ligand>
        <name>UDP-N-acetyl-alpha-D-glucosamine</name>
        <dbReference type="ChEBI" id="CHEBI:57705"/>
    </ligand>
</feature>
<feature type="binding site" evidence="1">
    <location>
        <position position="206"/>
    </location>
    <ligand>
        <name>UDP-N-acetyl-alpha-D-glucosamine</name>
        <dbReference type="ChEBI" id="CHEBI:57705"/>
    </ligand>
</feature>
<feature type="binding site" evidence="1">
    <location>
        <position position="234"/>
    </location>
    <ligand>
        <name>UDP-N-acetyl-alpha-D-glucosamine</name>
        <dbReference type="ChEBI" id="CHEBI:57705"/>
    </ligand>
</feature>
<feature type="binding site" evidence="1">
    <location>
        <position position="288"/>
    </location>
    <ligand>
        <name>UDP-N-acetyl-alpha-D-glucosamine</name>
        <dbReference type="ChEBI" id="CHEBI:57705"/>
    </ligand>
</feature>
<feature type="binding site" evidence="1">
    <location>
        <position position="333"/>
    </location>
    <ligand>
        <name>UDP-N-acetyl-alpha-D-glucosamine</name>
        <dbReference type="ChEBI" id="CHEBI:57705"/>
    </ligand>
</feature>
<protein>
    <recommendedName>
        <fullName evidence="1">UDP-N-acetylglucosamine--N-acetylmuramyl-(pentapeptide) pyrophosphoryl-undecaprenol N-acetylglucosamine transferase</fullName>
        <ecNumber evidence="1">2.4.1.227</ecNumber>
    </recommendedName>
    <alternativeName>
        <fullName evidence="1">Undecaprenyl-PP-MurNAc-pentapeptide-UDPGlcNAc GlcNAc transferase</fullName>
    </alternativeName>
</protein>
<accession>A1WC06</accession>
<proteinExistence type="inferred from homology"/>
<dbReference type="EC" id="2.4.1.227" evidence="1"/>
<dbReference type="EMBL" id="CP000539">
    <property type="protein sequence ID" value="ABM43781.1"/>
    <property type="molecule type" value="Genomic_DNA"/>
</dbReference>
<dbReference type="SMR" id="A1WC06"/>
<dbReference type="STRING" id="232721.Ajs_3670"/>
<dbReference type="CAZy" id="GT28">
    <property type="family name" value="Glycosyltransferase Family 28"/>
</dbReference>
<dbReference type="KEGG" id="ajs:Ajs_3670"/>
<dbReference type="eggNOG" id="COG0707">
    <property type="taxonomic scope" value="Bacteria"/>
</dbReference>
<dbReference type="HOGENOM" id="CLU_037404_2_0_4"/>
<dbReference type="UniPathway" id="UPA00219"/>
<dbReference type="Proteomes" id="UP000000645">
    <property type="component" value="Chromosome"/>
</dbReference>
<dbReference type="GO" id="GO:0005886">
    <property type="term" value="C:plasma membrane"/>
    <property type="evidence" value="ECO:0007669"/>
    <property type="project" value="UniProtKB-SubCell"/>
</dbReference>
<dbReference type="GO" id="GO:0051991">
    <property type="term" value="F:UDP-N-acetyl-D-glucosamine:N-acetylmuramoyl-L-alanyl-D-glutamyl-meso-2,6-diaminopimelyl-D-alanyl-D-alanine-diphosphoundecaprenol 4-beta-N-acetylglucosaminlytransferase activity"/>
    <property type="evidence" value="ECO:0007669"/>
    <property type="project" value="RHEA"/>
</dbReference>
<dbReference type="GO" id="GO:0050511">
    <property type="term" value="F:undecaprenyldiphospho-muramoylpentapeptide beta-N-acetylglucosaminyltransferase activity"/>
    <property type="evidence" value="ECO:0007669"/>
    <property type="project" value="UniProtKB-UniRule"/>
</dbReference>
<dbReference type="GO" id="GO:0005975">
    <property type="term" value="P:carbohydrate metabolic process"/>
    <property type="evidence" value="ECO:0007669"/>
    <property type="project" value="InterPro"/>
</dbReference>
<dbReference type="GO" id="GO:0051301">
    <property type="term" value="P:cell division"/>
    <property type="evidence" value="ECO:0007669"/>
    <property type="project" value="UniProtKB-KW"/>
</dbReference>
<dbReference type="GO" id="GO:0071555">
    <property type="term" value="P:cell wall organization"/>
    <property type="evidence" value="ECO:0007669"/>
    <property type="project" value="UniProtKB-KW"/>
</dbReference>
<dbReference type="GO" id="GO:0030259">
    <property type="term" value="P:lipid glycosylation"/>
    <property type="evidence" value="ECO:0007669"/>
    <property type="project" value="UniProtKB-UniRule"/>
</dbReference>
<dbReference type="GO" id="GO:0009252">
    <property type="term" value="P:peptidoglycan biosynthetic process"/>
    <property type="evidence" value="ECO:0007669"/>
    <property type="project" value="UniProtKB-UniRule"/>
</dbReference>
<dbReference type="GO" id="GO:0008360">
    <property type="term" value="P:regulation of cell shape"/>
    <property type="evidence" value="ECO:0007669"/>
    <property type="project" value="UniProtKB-KW"/>
</dbReference>
<dbReference type="CDD" id="cd03785">
    <property type="entry name" value="GT28_MurG"/>
    <property type="match status" value="1"/>
</dbReference>
<dbReference type="Gene3D" id="3.40.50.2000">
    <property type="entry name" value="Glycogen Phosphorylase B"/>
    <property type="match status" value="2"/>
</dbReference>
<dbReference type="HAMAP" id="MF_00033">
    <property type="entry name" value="MurG"/>
    <property type="match status" value="1"/>
</dbReference>
<dbReference type="InterPro" id="IPR006009">
    <property type="entry name" value="GlcNAc_MurG"/>
</dbReference>
<dbReference type="InterPro" id="IPR007235">
    <property type="entry name" value="Glyco_trans_28_C"/>
</dbReference>
<dbReference type="InterPro" id="IPR004276">
    <property type="entry name" value="GlycoTrans_28_N"/>
</dbReference>
<dbReference type="NCBIfam" id="TIGR01133">
    <property type="entry name" value="murG"/>
    <property type="match status" value="1"/>
</dbReference>
<dbReference type="PANTHER" id="PTHR21015:SF22">
    <property type="entry name" value="GLYCOSYLTRANSFERASE"/>
    <property type="match status" value="1"/>
</dbReference>
<dbReference type="PANTHER" id="PTHR21015">
    <property type="entry name" value="UDP-N-ACETYLGLUCOSAMINE--N-ACETYLMURAMYL-(PENTAPEPTIDE) PYROPHOSPHORYL-UNDECAPRENOL N-ACETYLGLUCOSAMINE TRANSFERASE 1"/>
    <property type="match status" value="1"/>
</dbReference>
<dbReference type="Pfam" id="PF04101">
    <property type="entry name" value="Glyco_tran_28_C"/>
    <property type="match status" value="1"/>
</dbReference>
<dbReference type="Pfam" id="PF03033">
    <property type="entry name" value="Glyco_transf_28"/>
    <property type="match status" value="1"/>
</dbReference>
<dbReference type="SUPFAM" id="SSF53756">
    <property type="entry name" value="UDP-Glycosyltransferase/glycogen phosphorylase"/>
    <property type="match status" value="1"/>
</dbReference>
<gene>
    <name evidence="1" type="primary">murG</name>
    <name type="ordered locus">Ajs_3670</name>
</gene>
<reference key="1">
    <citation type="submission" date="2006-12" db="EMBL/GenBank/DDBJ databases">
        <title>Complete sequence of chromosome 1 of Acidovorax sp. JS42.</title>
        <authorList>
            <person name="Copeland A."/>
            <person name="Lucas S."/>
            <person name="Lapidus A."/>
            <person name="Barry K."/>
            <person name="Detter J.C."/>
            <person name="Glavina del Rio T."/>
            <person name="Dalin E."/>
            <person name="Tice H."/>
            <person name="Pitluck S."/>
            <person name="Chertkov O."/>
            <person name="Brettin T."/>
            <person name="Bruce D."/>
            <person name="Han C."/>
            <person name="Tapia R."/>
            <person name="Gilna P."/>
            <person name="Schmutz J."/>
            <person name="Larimer F."/>
            <person name="Land M."/>
            <person name="Hauser L."/>
            <person name="Kyrpides N."/>
            <person name="Kim E."/>
            <person name="Stahl D."/>
            <person name="Richardson P."/>
        </authorList>
    </citation>
    <scope>NUCLEOTIDE SEQUENCE [LARGE SCALE GENOMIC DNA]</scope>
    <source>
        <strain>JS42</strain>
    </source>
</reference>
<organism>
    <name type="scientific">Acidovorax sp. (strain JS42)</name>
    <dbReference type="NCBI Taxonomy" id="232721"/>
    <lineage>
        <taxon>Bacteria</taxon>
        <taxon>Pseudomonadati</taxon>
        <taxon>Pseudomonadota</taxon>
        <taxon>Betaproteobacteria</taxon>
        <taxon>Burkholderiales</taxon>
        <taxon>Comamonadaceae</taxon>
        <taxon>Acidovorax</taxon>
    </lineage>
</organism>
<comment type="function">
    <text evidence="1">Cell wall formation. Catalyzes the transfer of a GlcNAc subunit on undecaprenyl-pyrophosphoryl-MurNAc-pentapeptide (lipid intermediate I) to form undecaprenyl-pyrophosphoryl-MurNAc-(pentapeptide)GlcNAc (lipid intermediate II).</text>
</comment>
<comment type="catalytic activity">
    <reaction evidence="1">
        <text>di-trans,octa-cis-undecaprenyl diphospho-N-acetyl-alpha-D-muramoyl-L-alanyl-D-glutamyl-meso-2,6-diaminopimeloyl-D-alanyl-D-alanine + UDP-N-acetyl-alpha-D-glucosamine = di-trans,octa-cis-undecaprenyl diphospho-[N-acetyl-alpha-D-glucosaminyl-(1-&gt;4)]-N-acetyl-alpha-D-muramoyl-L-alanyl-D-glutamyl-meso-2,6-diaminopimeloyl-D-alanyl-D-alanine + UDP + H(+)</text>
        <dbReference type="Rhea" id="RHEA:31227"/>
        <dbReference type="ChEBI" id="CHEBI:15378"/>
        <dbReference type="ChEBI" id="CHEBI:57705"/>
        <dbReference type="ChEBI" id="CHEBI:58223"/>
        <dbReference type="ChEBI" id="CHEBI:61387"/>
        <dbReference type="ChEBI" id="CHEBI:61388"/>
        <dbReference type="EC" id="2.4.1.227"/>
    </reaction>
</comment>
<comment type="pathway">
    <text evidence="1">Cell wall biogenesis; peptidoglycan biosynthesis.</text>
</comment>
<comment type="subcellular location">
    <subcellularLocation>
        <location evidence="1">Cell inner membrane</location>
        <topology evidence="1">Peripheral membrane protein</topology>
        <orientation evidence="1">Cytoplasmic side</orientation>
    </subcellularLocation>
</comment>
<comment type="similarity">
    <text evidence="1">Belongs to the glycosyltransferase 28 family. MurG subfamily.</text>
</comment>
<name>MURG_ACISJ</name>
<keyword id="KW-0131">Cell cycle</keyword>
<keyword id="KW-0132">Cell division</keyword>
<keyword id="KW-0997">Cell inner membrane</keyword>
<keyword id="KW-1003">Cell membrane</keyword>
<keyword id="KW-0133">Cell shape</keyword>
<keyword id="KW-0961">Cell wall biogenesis/degradation</keyword>
<keyword id="KW-0328">Glycosyltransferase</keyword>
<keyword id="KW-0472">Membrane</keyword>
<keyword id="KW-0573">Peptidoglycan synthesis</keyword>
<keyword id="KW-0808">Transferase</keyword>
<sequence>MTSRFGHSQHPRRGRSARARAGRREGVQSNFPATQVLERSAHSLPARQRTALVMAGGTGGHIFPGLALAEALRERGWQVHWLGTPGSMEERLVPPRGFAFEPIDFSGVRGKGLKTLLALPLRLARACLQARAVVRRLQPDVVIGLGGYVTFPGGIAARLARKPLLLHEQNSVPGMANKLLSRLATRVYTAFPNVLPDAQWVGNPMRRAFTRQPRPERRLAGREGPLRLLVVGGSLGAKALNDIVPQALAWIHEQDRPIVTHQSGESQIEALRRSYAAAGVEATLTPFIEDTAAAFAEADLVLCRAGASTVTEIAAVGAAAVFVPFPHAVDDHQTTNAQYLVKVGGGWLVQQADLTAHGLAEMLQNMKRQDLLAKAQKARTMRKINATRDIVAACERLAR</sequence>
<evidence type="ECO:0000255" key="1">
    <source>
        <dbReference type="HAMAP-Rule" id="MF_00033"/>
    </source>
</evidence>
<evidence type="ECO:0000256" key="2">
    <source>
        <dbReference type="SAM" id="MobiDB-lite"/>
    </source>
</evidence>